<reference key="1">
    <citation type="journal article" date="2008" name="J. Biotechnol.">
        <title>The genome of Xanthomonas campestris pv. campestris B100 and its use for the reconstruction of metabolic pathways involved in xanthan biosynthesis.</title>
        <authorList>
            <person name="Vorhoelter F.-J."/>
            <person name="Schneiker S."/>
            <person name="Goesmann A."/>
            <person name="Krause L."/>
            <person name="Bekel T."/>
            <person name="Kaiser O."/>
            <person name="Linke B."/>
            <person name="Patschkowski T."/>
            <person name="Rueckert C."/>
            <person name="Schmid J."/>
            <person name="Sidhu V.K."/>
            <person name="Sieber V."/>
            <person name="Tauch A."/>
            <person name="Watt S.A."/>
            <person name="Weisshaar B."/>
            <person name="Becker A."/>
            <person name="Niehaus K."/>
            <person name="Puehler A."/>
        </authorList>
    </citation>
    <scope>NUCLEOTIDE SEQUENCE [LARGE SCALE GENOMIC DNA]</scope>
    <source>
        <strain>B100</strain>
    </source>
</reference>
<protein>
    <recommendedName>
        <fullName evidence="1">Argininosuccinate lyase</fullName>
        <shortName evidence="1">ASAL</shortName>
        <ecNumber evidence="1">4.3.2.1</ecNumber>
    </recommendedName>
    <alternativeName>
        <fullName evidence="1">Arginosuccinase</fullName>
    </alternativeName>
</protein>
<gene>
    <name evidence="1" type="primary">argH</name>
    <name type="ordered locus">xcc-b100_1937</name>
</gene>
<proteinExistence type="inferred from homology"/>
<comment type="catalytic activity">
    <reaction evidence="1">
        <text>2-(N(omega)-L-arginino)succinate = fumarate + L-arginine</text>
        <dbReference type="Rhea" id="RHEA:24020"/>
        <dbReference type="ChEBI" id="CHEBI:29806"/>
        <dbReference type="ChEBI" id="CHEBI:32682"/>
        <dbReference type="ChEBI" id="CHEBI:57472"/>
        <dbReference type="EC" id="4.3.2.1"/>
    </reaction>
</comment>
<comment type="pathway">
    <text evidence="1">Amino-acid biosynthesis; L-arginine biosynthesis; L-arginine from L-ornithine and carbamoyl phosphate: step 3/3.</text>
</comment>
<comment type="subcellular location">
    <subcellularLocation>
        <location evidence="1">Cytoplasm</location>
    </subcellularLocation>
</comment>
<comment type="similarity">
    <text evidence="1">Belongs to the lyase 1 family. Argininosuccinate lyase subfamily.</text>
</comment>
<feature type="chain" id="PRO_1000089129" description="Argininosuccinate lyase">
    <location>
        <begin position="1"/>
        <end position="431"/>
    </location>
</feature>
<sequence length="431" mass="46312">MTNLLWQKPGVAVDAKIQTFLAGDDVILDREFFLYDIAASKAHAQGLQHIGILSLEELGGLSEQLDLLAGDFRSGAFVLDAHYEDCHSAIEARLTERLGDAGRKIHTGRSRNDQILVATRLWLKDKLQRVAALSTEVAKVALDRAQAEAELPVPGYTHIQRAVVSSAGMWWAGWAEAFIDNAVRANDTFKLVDTNPLGTAAGYGVNLPLDRAHTTAELGFARLQVSPIYAQLSRGKFELAALEALGGATLDLRRIAWDLSLFTSGEFAFVALPAQYTTGSSIMPNKRNPDVIELMRATHASVAAARTEIEQLLSLPSGYHRDLQSSKGAIVHGFARGLAALELLPALLANLEWRPDKLRAAIDSGMYATDVAVEAAVAGVPFRDAYKAAAAASDSAGQGRTPEASLAARVSPGAAADLQLDVLRARWEALQ</sequence>
<dbReference type="EC" id="4.3.2.1" evidence="1"/>
<dbReference type="EMBL" id="AM920689">
    <property type="protein sequence ID" value="CAP51290.1"/>
    <property type="molecule type" value="Genomic_DNA"/>
</dbReference>
<dbReference type="SMR" id="B0RS55"/>
<dbReference type="KEGG" id="xca:xcc-b100_1937"/>
<dbReference type="HOGENOM" id="CLU_027272_2_0_6"/>
<dbReference type="UniPathway" id="UPA00068">
    <property type="reaction ID" value="UER00114"/>
</dbReference>
<dbReference type="Proteomes" id="UP000001188">
    <property type="component" value="Chromosome"/>
</dbReference>
<dbReference type="GO" id="GO:0005829">
    <property type="term" value="C:cytosol"/>
    <property type="evidence" value="ECO:0007669"/>
    <property type="project" value="TreeGrafter"/>
</dbReference>
<dbReference type="GO" id="GO:0004056">
    <property type="term" value="F:argininosuccinate lyase activity"/>
    <property type="evidence" value="ECO:0007669"/>
    <property type="project" value="UniProtKB-UniRule"/>
</dbReference>
<dbReference type="GO" id="GO:0042450">
    <property type="term" value="P:arginine biosynthetic process via ornithine"/>
    <property type="evidence" value="ECO:0007669"/>
    <property type="project" value="InterPro"/>
</dbReference>
<dbReference type="GO" id="GO:0006526">
    <property type="term" value="P:L-arginine biosynthetic process"/>
    <property type="evidence" value="ECO:0007669"/>
    <property type="project" value="UniProtKB-UniRule"/>
</dbReference>
<dbReference type="Gene3D" id="1.10.40.30">
    <property type="entry name" value="Fumarase/aspartase (C-terminal domain)"/>
    <property type="match status" value="1"/>
</dbReference>
<dbReference type="Gene3D" id="1.20.200.10">
    <property type="entry name" value="Fumarase/aspartase (Central domain)"/>
    <property type="match status" value="1"/>
</dbReference>
<dbReference type="Gene3D" id="1.10.275.10">
    <property type="entry name" value="Fumarase/aspartase (N-terminal domain)"/>
    <property type="match status" value="1"/>
</dbReference>
<dbReference type="HAMAP" id="MF_00006">
    <property type="entry name" value="Arg_succ_lyase"/>
    <property type="match status" value="1"/>
</dbReference>
<dbReference type="InterPro" id="IPR009049">
    <property type="entry name" value="Argininosuccinate_lyase"/>
</dbReference>
<dbReference type="InterPro" id="IPR024083">
    <property type="entry name" value="Fumarase/histidase_N"/>
</dbReference>
<dbReference type="InterPro" id="IPR020557">
    <property type="entry name" value="Fumarate_lyase_CS"/>
</dbReference>
<dbReference type="InterPro" id="IPR000362">
    <property type="entry name" value="Fumarate_lyase_fam"/>
</dbReference>
<dbReference type="InterPro" id="IPR022761">
    <property type="entry name" value="Fumarate_lyase_N"/>
</dbReference>
<dbReference type="InterPro" id="IPR008948">
    <property type="entry name" value="L-Aspartase-like"/>
</dbReference>
<dbReference type="PANTHER" id="PTHR43814">
    <property type="entry name" value="ARGININOSUCCINATE LYASE"/>
    <property type="match status" value="1"/>
</dbReference>
<dbReference type="PANTHER" id="PTHR43814:SF1">
    <property type="entry name" value="ARGININOSUCCINATE LYASE"/>
    <property type="match status" value="1"/>
</dbReference>
<dbReference type="Pfam" id="PF00206">
    <property type="entry name" value="Lyase_1"/>
    <property type="match status" value="1"/>
</dbReference>
<dbReference type="PRINTS" id="PR00145">
    <property type="entry name" value="ARGSUCLYASE"/>
</dbReference>
<dbReference type="PRINTS" id="PR00149">
    <property type="entry name" value="FUMRATELYASE"/>
</dbReference>
<dbReference type="SUPFAM" id="SSF48557">
    <property type="entry name" value="L-aspartase-like"/>
    <property type="match status" value="1"/>
</dbReference>
<dbReference type="PROSITE" id="PS00163">
    <property type="entry name" value="FUMARATE_LYASES"/>
    <property type="match status" value="1"/>
</dbReference>
<accession>B0RS55</accession>
<name>ARLY_XANCB</name>
<evidence type="ECO:0000255" key="1">
    <source>
        <dbReference type="HAMAP-Rule" id="MF_00006"/>
    </source>
</evidence>
<organism>
    <name type="scientific">Xanthomonas campestris pv. campestris (strain B100)</name>
    <dbReference type="NCBI Taxonomy" id="509169"/>
    <lineage>
        <taxon>Bacteria</taxon>
        <taxon>Pseudomonadati</taxon>
        <taxon>Pseudomonadota</taxon>
        <taxon>Gammaproteobacteria</taxon>
        <taxon>Lysobacterales</taxon>
        <taxon>Lysobacteraceae</taxon>
        <taxon>Xanthomonas</taxon>
    </lineage>
</organism>
<keyword id="KW-0028">Amino-acid biosynthesis</keyword>
<keyword id="KW-0055">Arginine biosynthesis</keyword>
<keyword id="KW-0963">Cytoplasm</keyword>
<keyword id="KW-0456">Lyase</keyword>